<comment type="function">
    <text evidence="1">Catalyzes the conversion of uracil and 5-phospho-alpha-D-ribose 1-diphosphate (PRPP) to UMP and diphosphate.</text>
</comment>
<comment type="catalytic activity">
    <reaction evidence="1">
        <text>UMP + diphosphate = 5-phospho-alpha-D-ribose 1-diphosphate + uracil</text>
        <dbReference type="Rhea" id="RHEA:13017"/>
        <dbReference type="ChEBI" id="CHEBI:17568"/>
        <dbReference type="ChEBI" id="CHEBI:33019"/>
        <dbReference type="ChEBI" id="CHEBI:57865"/>
        <dbReference type="ChEBI" id="CHEBI:58017"/>
        <dbReference type="EC" id="2.4.2.9"/>
    </reaction>
</comment>
<comment type="cofactor">
    <cofactor evidence="1">
        <name>Mg(2+)</name>
        <dbReference type="ChEBI" id="CHEBI:18420"/>
    </cofactor>
    <text evidence="1">Binds 1 Mg(2+) ion per subunit. The magnesium is bound as Mg-PRPP.</text>
</comment>
<comment type="activity regulation">
    <text evidence="1">Allosterically activated by GTP.</text>
</comment>
<comment type="pathway">
    <text evidence="1">Pyrimidine metabolism; UMP biosynthesis via salvage pathway; UMP from uracil: step 1/1.</text>
</comment>
<comment type="similarity">
    <text evidence="1">Belongs to the UPRTase family.</text>
</comment>
<name>UPP_STRPD</name>
<sequence>MGKCQVISHPLIQHKLSILRRQTTSTKDFRELVNEIAMLMGYEVSRDLPLEDVDIQTPVSKTVQKQLAGKKLAIVPILRAGIGMVDGLLSLVPAAKVGHIGMYRNEETLEPVEYLVKLPEDINQRQIFLVDPMLATGGSAILAVDSLKKRGAANIKFVCLVAAPEGVKKLQEAHPDIDIFTAALDDHLNEHGYIVPGLGDAGDRLFGTK</sequence>
<accession>Q1JID6</accession>
<keyword id="KW-0021">Allosteric enzyme</keyword>
<keyword id="KW-0328">Glycosyltransferase</keyword>
<keyword id="KW-0342">GTP-binding</keyword>
<keyword id="KW-0460">Magnesium</keyword>
<keyword id="KW-0547">Nucleotide-binding</keyword>
<keyword id="KW-0808">Transferase</keyword>
<reference key="1">
    <citation type="journal article" date="2006" name="Proc. Natl. Acad. Sci. U.S.A.">
        <title>Molecular genetic anatomy of inter- and intraserotype variation in the human bacterial pathogen group A Streptococcus.</title>
        <authorList>
            <person name="Beres S.B."/>
            <person name="Richter E.W."/>
            <person name="Nagiec M.J."/>
            <person name="Sumby P."/>
            <person name="Porcella S.F."/>
            <person name="DeLeo F.R."/>
            <person name="Musser J.M."/>
        </authorList>
    </citation>
    <scope>NUCLEOTIDE SEQUENCE [LARGE SCALE GENOMIC DNA]</scope>
    <source>
        <strain>MGAS10270</strain>
    </source>
</reference>
<evidence type="ECO:0000255" key="1">
    <source>
        <dbReference type="HAMAP-Rule" id="MF_01218"/>
    </source>
</evidence>
<protein>
    <recommendedName>
        <fullName evidence="1">Uracil phosphoribosyltransferase</fullName>
        <ecNumber evidence="1">2.4.2.9</ecNumber>
    </recommendedName>
    <alternativeName>
        <fullName evidence="1">UMP pyrophosphorylase</fullName>
    </alternativeName>
    <alternativeName>
        <fullName evidence="1">UPRTase</fullName>
    </alternativeName>
</protein>
<feature type="chain" id="PRO_1000053796" description="Uracil phosphoribosyltransferase">
    <location>
        <begin position="1"/>
        <end position="209"/>
    </location>
</feature>
<feature type="binding site" evidence="1">
    <location>
        <position position="79"/>
    </location>
    <ligand>
        <name>5-phospho-alpha-D-ribose 1-diphosphate</name>
        <dbReference type="ChEBI" id="CHEBI:58017"/>
    </ligand>
</feature>
<feature type="binding site" evidence="1">
    <location>
        <position position="104"/>
    </location>
    <ligand>
        <name>5-phospho-alpha-D-ribose 1-diphosphate</name>
        <dbReference type="ChEBI" id="CHEBI:58017"/>
    </ligand>
</feature>
<feature type="binding site" evidence="1">
    <location>
        <begin position="131"/>
        <end position="139"/>
    </location>
    <ligand>
        <name>5-phospho-alpha-D-ribose 1-diphosphate</name>
        <dbReference type="ChEBI" id="CHEBI:58017"/>
    </ligand>
</feature>
<feature type="binding site" evidence="1">
    <location>
        <position position="194"/>
    </location>
    <ligand>
        <name>uracil</name>
        <dbReference type="ChEBI" id="CHEBI:17568"/>
    </ligand>
</feature>
<feature type="binding site" evidence="1">
    <location>
        <begin position="199"/>
        <end position="201"/>
    </location>
    <ligand>
        <name>uracil</name>
        <dbReference type="ChEBI" id="CHEBI:17568"/>
    </ligand>
</feature>
<feature type="binding site" evidence="1">
    <location>
        <position position="200"/>
    </location>
    <ligand>
        <name>5-phospho-alpha-D-ribose 1-diphosphate</name>
        <dbReference type="ChEBI" id="CHEBI:58017"/>
    </ligand>
</feature>
<proteinExistence type="inferred from homology"/>
<organism>
    <name type="scientific">Streptococcus pyogenes serotype M2 (strain MGAS10270)</name>
    <dbReference type="NCBI Taxonomy" id="370552"/>
    <lineage>
        <taxon>Bacteria</taxon>
        <taxon>Bacillati</taxon>
        <taxon>Bacillota</taxon>
        <taxon>Bacilli</taxon>
        <taxon>Lactobacillales</taxon>
        <taxon>Streptococcaceae</taxon>
        <taxon>Streptococcus</taxon>
    </lineage>
</organism>
<gene>
    <name evidence="1" type="primary">upp</name>
    <name type="ordered locus">MGAS10270_Spy0322</name>
</gene>
<dbReference type="EC" id="2.4.2.9" evidence="1"/>
<dbReference type="EMBL" id="CP000260">
    <property type="protein sequence ID" value="ABF33387.1"/>
    <property type="molecule type" value="Genomic_DNA"/>
</dbReference>
<dbReference type="SMR" id="Q1JID6"/>
<dbReference type="KEGG" id="sph:MGAS10270_Spy0322"/>
<dbReference type="HOGENOM" id="CLU_067096_2_2_9"/>
<dbReference type="UniPathway" id="UPA00574">
    <property type="reaction ID" value="UER00636"/>
</dbReference>
<dbReference type="Proteomes" id="UP000002436">
    <property type="component" value="Chromosome"/>
</dbReference>
<dbReference type="GO" id="GO:0005525">
    <property type="term" value="F:GTP binding"/>
    <property type="evidence" value="ECO:0007669"/>
    <property type="project" value="UniProtKB-KW"/>
</dbReference>
<dbReference type="GO" id="GO:0000287">
    <property type="term" value="F:magnesium ion binding"/>
    <property type="evidence" value="ECO:0007669"/>
    <property type="project" value="UniProtKB-UniRule"/>
</dbReference>
<dbReference type="GO" id="GO:0004845">
    <property type="term" value="F:uracil phosphoribosyltransferase activity"/>
    <property type="evidence" value="ECO:0007669"/>
    <property type="project" value="UniProtKB-UniRule"/>
</dbReference>
<dbReference type="GO" id="GO:0044206">
    <property type="term" value="P:UMP salvage"/>
    <property type="evidence" value="ECO:0007669"/>
    <property type="project" value="UniProtKB-UniRule"/>
</dbReference>
<dbReference type="GO" id="GO:0006223">
    <property type="term" value="P:uracil salvage"/>
    <property type="evidence" value="ECO:0007669"/>
    <property type="project" value="InterPro"/>
</dbReference>
<dbReference type="CDD" id="cd06223">
    <property type="entry name" value="PRTases_typeI"/>
    <property type="match status" value="1"/>
</dbReference>
<dbReference type="FunFam" id="3.40.50.2020:FF:000003">
    <property type="entry name" value="Uracil phosphoribosyltransferase"/>
    <property type="match status" value="1"/>
</dbReference>
<dbReference type="Gene3D" id="3.40.50.2020">
    <property type="match status" value="1"/>
</dbReference>
<dbReference type="HAMAP" id="MF_01218_B">
    <property type="entry name" value="Upp_B"/>
    <property type="match status" value="1"/>
</dbReference>
<dbReference type="InterPro" id="IPR000836">
    <property type="entry name" value="PRibTrfase_dom"/>
</dbReference>
<dbReference type="InterPro" id="IPR029057">
    <property type="entry name" value="PRTase-like"/>
</dbReference>
<dbReference type="InterPro" id="IPR034332">
    <property type="entry name" value="Upp_B"/>
</dbReference>
<dbReference type="InterPro" id="IPR050054">
    <property type="entry name" value="UPRTase/APRTase"/>
</dbReference>
<dbReference type="InterPro" id="IPR005765">
    <property type="entry name" value="Ura_phspho_trans"/>
</dbReference>
<dbReference type="NCBIfam" id="NF001097">
    <property type="entry name" value="PRK00129.1"/>
    <property type="match status" value="1"/>
</dbReference>
<dbReference type="NCBIfam" id="TIGR01091">
    <property type="entry name" value="upp"/>
    <property type="match status" value="1"/>
</dbReference>
<dbReference type="PANTHER" id="PTHR32315">
    <property type="entry name" value="ADENINE PHOSPHORIBOSYLTRANSFERASE"/>
    <property type="match status" value="1"/>
</dbReference>
<dbReference type="PANTHER" id="PTHR32315:SF4">
    <property type="entry name" value="URACIL PHOSPHORIBOSYLTRANSFERASE, CHLOROPLASTIC"/>
    <property type="match status" value="1"/>
</dbReference>
<dbReference type="Pfam" id="PF14681">
    <property type="entry name" value="UPRTase"/>
    <property type="match status" value="1"/>
</dbReference>
<dbReference type="SUPFAM" id="SSF53271">
    <property type="entry name" value="PRTase-like"/>
    <property type="match status" value="1"/>
</dbReference>